<protein>
    <recommendedName>
        <fullName>Actin, cytoplasmic 2</fullName>
        <ecNumber evidence="3">3.6.4.-</ecNumber>
    </recommendedName>
    <alternativeName>
        <fullName>Gamma-actin</fullName>
    </alternativeName>
    <component>
        <recommendedName>
            <fullName>Actin, cytoplasmic 2, N-terminally processed</fullName>
        </recommendedName>
    </component>
</protein>
<name>ACTG_BOVIN</name>
<comment type="function">
    <text evidence="1 2">Actins are highly conserved proteins that are involved in various types of cell motility and are ubiquitously expressed in all eukaryotic cells. May play a role in the repair of noise-induced stereocilia gaps thereby maintains hearing sensitivity following loud noise damage (By similarity).</text>
</comment>
<comment type="catalytic activity">
    <reaction evidence="3">
        <text>ATP + H2O = ADP + phosphate + H(+)</text>
        <dbReference type="Rhea" id="RHEA:13065"/>
        <dbReference type="ChEBI" id="CHEBI:15377"/>
        <dbReference type="ChEBI" id="CHEBI:15378"/>
        <dbReference type="ChEBI" id="CHEBI:30616"/>
        <dbReference type="ChEBI" id="CHEBI:43474"/>
        <dbReference type="ChEBI" id="CHEBI:456216"/>
    </reaction>
</comment>
<comment type="subunit">
    <text evidence="2">Polymerization of globular actin (G-actin) leads to a structural filament (F-actin) in the form of a two-stranded helix. Each actin can bind to 4 others. Interacts with TWF1, CAPZB, cofilin and profilin.</text>
</comment>
<comment type="subcellular location">
    <subcellularLocation>
        <location evidence="2">Cytoplasm</location>
        <location evidence="2">Cytoskeleton</location>
    </subcellularLocation>
</comment>
<comment type="PTM">
    <molecule>Actin, cytoplasmic 2</molecule>
    <text evidence="2">N-terminal cleavage of acetylated methionine of immature cytoplasmic actin by ACTMAP.</text>
</comment>
<comment type="PTM">
    <text evidence="1">Oxidation of Met-44 and Met-47 by MICALs (MICAL1, MICAL2 or MICAL3) to form methionine sulfoxide promotes actin filament depolymerization. MICAL1 and MICAL2 produce the (R)-S-oxide form. The (R)-S-oxide form is reverted by MSRB1 and MSRB2, which promote actin repolymerization.</text>
</comment>
<comment type="PTM">
    <text evidence="2">Monomethylation at Lys-84 (K84me1) regulates actin-myosin interaction and actomyosin-dependent processes. Demethylation by ALKBH4 is required for maintaining actomyosin dynamics supporting normal cleavage furrow ingression during cytokinesis and cell migration.</text>
</comment>
<comment type="PTM">
    <molecule>Actin, cytoplasmic 2, N-terminally processed</molecule>
    <text evidence="2">N-terminal acetylation by NAA80 affects actin filament depolymerization and elongation, including elongation driven by formins. In contrast, filament nucleation by the Arp2/3 complex is not affected.</text>
</comment>
<comment type="PTM">
    <text evidence="2">Methylated at His-73 by SETD3.</text>
</comment>
<comment type="miscellaneous">
    <text>In vertebrates 3 main groups of actin isoforms, alpha, beta and gamma have been identified. The alpha actins are found in muscle tissues and are a major constituent of the contractile apparatus. The beta and gamma actins coexist in most cell types as components of the cytoskeleton and as mediators of internal cell motility.</text>
</comment>
<comment type="similarity">
    <text evidence="5">Belongs to the actin family.</text>
</comment>
<gene>
    <name type="primary">ACTG1</name>
    <name type="synonym">ACTG</name>
</gene>
<accession>P63258</accession>
<accession>A6QL78</accession>
<accession>P02571</accession>
<accession>P14104</accession>
<accession>P99022</accession>
<accession>Q3SZC9</accession>
<feature type="chain" id="PRO_0000367099" description="Actin, cytoplasmic 2">
    <location>
        <begin position="1"/>
        <end position="375"/>
    </location>
</feature>
<feature type="initiator methionine" description="Removed; alternate" evidence="2 4">
    <location>
        <position position="1"/>
    </location>
</feature>
<feature type="chain" id="PRO_0000000829" description="Actin, cytoplasmic 2, N-terminally processed">
    <location>
        <begin position="2"/>
        <end position="375"/>
    </location>
</feature>
<feature type="modified residue" description="N-acetylmethionine" evidence="2">
    <location>
        <position position="1"/>
    </location>
</feature>
<feature type="modified residue" description="N-acetylglutamate; in Actin, cytoplasmic 2, N-terminally processed" evidence="2">
    <location>
        <position position="2"/>
    </location>
</feature>
<feature type="modified residue" description="Methionine (R)-sulfoxide" evidence="1">
    <location>
        <position position="44"/>
    </location>
</feature>
<feature type="modified residue" description="Methionine (R)-sulfoxide" evidence="1">
    <location>
        <position position="47"/>
    </location>
</feature>
<feature type="modified residue" description="Tele-methylhistidine" evidence="4">
    <location>
        <position position="73"/>
    </location>
</feature>
<feature type="modified residue" description="N6-methyllysine" evidence="2">
    <location>
        <position position="84"/>
    </location>
</feature>
<reference key="1">
    <citation type="submission" date="2007-06" db="EMBL/GenBank/DDBJ databases">
        <authorList>
            <consortium name="NIH - Mammalian Gene Collection (MGC) project"/>
        </authorList>
    </citation>
    <scope>NUCLEOTIDE SEQUENCE [LARGE SCALE MRNA]</scope>
    <source>
        <strain>Crossbred X Angus</strain>
        <strain>Hereford</strain>
        <tissue>Fetal brain</tissue>
        <tissue>Ileum</tissue>
    </source>
</reference>
<reference key="2">
    <citation type="journal article" date="1978" name="Eur. J. Biochem.">
        <title>Actin amino-acid sequences. Comparison of actins from calf thymus, bovine brain, and SV40-transformed mouse 3T3 cells with rabbit skeletal muscle actin.</title>
        <authorList>
            <person name="Vandekerckhove J."/>
            <person name="Weber K."/>
        </authorList>
    </citation>
    <scope>PROTEIN SEQUENCE OF 2-375</scope>
    <scope>METHYLATION AT HIS-73</scope>
    <source>
        <tissue>Thymus</tissue>
    </source>
</reference>
<organism>
    <name type="scientific">Bos taurus</name>
    <name type="common">Bovine</name>
    <dbReference type="NCBI Taxonomy" id="9913"/>
    <lineage>
        <taxon>Eukaryota</taxon>
        <taxon>Metazoa</taxon>
        <taxon>Chordata</taxon>
        <taxon>Craniata</taxon>
        <taxon>Vertebrata</taxon>
        <taxon>Euteleostomi</taxon>
        <taxon>Mammalia</taxon>
        <taxon>Eutheria</taxon>
        <taxon>Laurasiatheria</taxon>
        <taxon>Artiodactyla</taxon>
        <taxon>Ruminantia</taxon>
        <taxon>Pecora</taxon>
        <taxon>Bovidae</taxon>
        <taxon>Bovinae</taxon>
        <taxon>Bos</taxon>
    </lineage>
</organism>
<sequence>MEEEIAALVIDNGSGMCKAGFAGDDAPRAVFPSIVGRPRHQGVMVGMGQKDSYVGDEAQSKRGILTLKYPIEHGIVTNWDDMEKIWHHTFYNELRVAPEEHPVLLTEAPLNPKANREKMTQIMFETFNTPAMYVAIQAVLSLYASGRTTGIVMDSGDGVTHTVPIYEGYALPHAILRLDLAGRDLTDYLMKILTERGYSFTTTAEREIVRDIKEKLCYVALDFEQEMATAASSSSLEKSYELPDGQVITIGNERFRCPEALFQPSFLGMESCGIHETTFNSIMKCDVDIRKDLYANTVLSGGTTMYPGIADRMQKEITALAPSTMKIKIIAPPERKYSVWIGGSILASLSTFQQMWISKQEYDESGPSIVHRKCF</sequence>
<dbReference type="EC" id="3.6.4.-" evidence="3"/>
<dbReference type="EMBL" id="BC102951">
    <property type="protein sequence ID" value="AAI02952.1"/>
    <property type="molecule type" value="mRNA"/>
</dbReference>
<dbReference type="EMBL" id="BC147868">
    <property type="protein sequence ID" value="AAI47869.1"/>
    <property type="molecule type" value="mRNA"/>
</dbReference>
<dbReference type="PIR" id="B14185">
    <property type="entry name" value="ATBOG"/>
</dbReference>
<dbReference type="RefSeq" id="NP_001028790.1">
    <property type="nucleotide sequence ID" value="NM_001033618.1"/>
</dbReference>
<dbReference type="SMR" id="P63258"/>
<dbReference type="FunCoup" id="P63258">
    <property type="interactions" value="3192"/>
</dbReference>
<dbReference type="STRING" id="9913.ENSBTAP00000008132"/>
<dbReference type="PaxDb" id="9913-ENSBTAP00000008132"/>
<dbReference type="GeneID" id="404122"/>
<dbReference type="KEGG" id="bta:404122"/>
<dbReference type="CTD" id="71"/>
<dbReference type="VEuPathDB" id="HostDB:ENSBTAG00000006189"/>
<dbReference type="eggNOG" id="KOG0676">
    <property type="taxonomic scope" value="Eukaryota"/>
</dbReference>
<dbReference type="HOGENOM" id="CLU_027965_0_2_1"/>
<dbReference type="InParanoid" id="P63258"/>
<dbReference type="OMA" id="PNIMVGM"/>
<dbReference type="OrthoDB" id="9816604at2759"/>
<dbReference type="TreeFam" id="TF354237"/>
<dbReference type="Reactome" id="R-BTA-114608">
    <property type="pathway name" value="Platelet degranulation"/>
</dbReference>
<dbReference type="Reactome" id="R-BTA-190873">
    <property type="pathway name" value="Gap junction degradation"/>
</dbReference>
<dbReference type="Reactome" id="R-BTA-196025">
    <property type="pathway name" value="Formation of annular gap junctions"/>
</dbReference>
<dbReference type="Reactome" id="R-BTA-2029482">
    <property type="pathway name" value="Regulation of actin dynamics for phagocytic cup formation"/>
</dbReference>
<dbReference type="Reactome" id="R-BTA-3928662">
    <property type="pathway name" value="EPHB-mediated forward signaling"/>
</dbReference>
<dbReference type="Reactome" id="R-BTA-418990">
    <property type="pathway name" value="Adherens junctions interactions"/>
</dbReference>
<dbReference type="Reactome" id="R-BTA-4420097">
    <property type="pathway name" value="VEGFA-VEGFR2 Pathway"/>
</dbReference>
<dbReference type="Reactome" id="R-BTA-446353">
    <property type="pathway name" value="Cell-extracellular matrix interactions"/>
</dbReference>
<dbReference type="Reactome" id="R-BTA-5626467">
    <property type="pathway name" value="RHO GTPases activate IQGAPs"/>
</dbReference>
<dbReference type="Reactome" id="R-BTA-5663213">
    <property type="pathway name" value="RHO GTPases Activate WASPs and WAVEs"/>
</dbReference>
<dbReference type="Reactome" id="R-BTA-5663220">
    <property type="pathway name" value="RHO GTPases Activate Formins"/>
</dbReference>
<dbReference type="Reactome" id="R-BTA-5674135">
    <property type="pathway name" value="MAP2K and MAPK activation"/>
</dbReference>
<dbReference type="Reactome" id="R-BTA-8856828">
    <property type="pathway name" value="Clathrin-mediated endocytosis"/>
</dbReference>
<dbReference type="Reactome" id="R-BTA-9013418">
    <property type="pathway name" value="RHOBTB2 GTPase cycle"/>
</dbReference>
<dbReference type="Reactome" id="R-BTA-9035034">
    <property type="pathway name" value="RHOF GTPase cycle"/>
</dbReference>
<dbReference type="Reactome" id="R-BTA-9913351">
    <property type="pathway name" value="Formation of the dystrophin-glycoprotein complex (DGC)"/>
</dbReference>
<dbReference type="Proteomes" id="UP000009136">
    <property type="component" value="Chromosome 19"/>
</dbReference>
<dbReference type="Bgee" id="ENSBTAG00000006189">
    <property type="expression patterns" value="Expressed in Ammon's horn and 104 other cell types or tissues"/>
</dbReference>
<dbReference type="GO" id="GO:0015629">
    <property type="term" value="C:actin cytoskeleton"/>
    <property type="evidence" value="ECO:0000318"/>
    <property type="project" value="GO_Central"/>
</dbReference>
<dbReference type="GO" id="GO:0005884">
    <property type="term" value="C:actin filament"/>
    <property type="evidence" value="ECO:0000318"/>
    <property type="project" value="GO_Central"/>
</dbReference>
<dbReference type="GO" id="GO:0030424">
    <property type="term" value="C:axon"/>
    <property type="evidence" value="ECO:0000318"/>
    <property type="project" value="GO_Central"/>
</dbReference>
<dbReference type="GO" id="GO:0005737">
    <property type="term" value="C:cytoplasm"/>
    <property type="evidence" value="ECO:0000318"/>
    <property type="project" value="GO_Central"/>
</dbReference>
<dbReference type="GO" id="GO:0005856">
    <property type="term" value="C:cytoskeleton"/>
    <property type="evidence" value="ECO:0000250"/>
    <property type="project" value="AgBase"/>
</dbReference>
<dbReference type="GO" id="GO:0005829">
    <property type="term" value="C:cytosol"/>
    <property type="evidence" value="ECO:0000304"/>
    <property type="project" value="Reactome"/>
</dbReference>
<dbReference type="GO" id="GO:0097433">
    <property type="term" value="C:dense body"/>
    <property type="evidence" value="ECO:0000250"/>
    <property type="project" value="AgBase"/>
</dbReference>
<dbReference type="GO" id="GO:0005925">
    <property type="term" value="C:focal adhesion"/>
    <property type="evidence" value="ECO:0000250"/>
    <property type="project" value="AgBase"/>
</dbReference>
<dbReference type="GO" id="GO:0016020">
    <property type="term" value="C:membrane"/>
    <property type="evidence" value="ECO:0000318"/>
    <property type="project" value="GO_Central"/>
</dbReference>
<dbReference type="GO" id="GO:0035267">
    <property type="term" value="C:NuA4 histone acetyltransferase complex"/>
    <property type="evidence" value="ECO:0000318"/>
    <property type="project" value="GO_Central"/>
</dbReference>
<dbReference type="GO" id="GO:0005886">
    <property type="term" value="C:plasma membrane"/>
    <property type="evidence" value="ECO:0000250"/>
    <property type="project" value="AgBase"/>
</dbReference>
<dbReference type="GO" id="GO:0045202">
    <property type="term" value="C:synapse"/>
    <property type="evidence" value="ECO:0000318"/>
    <property type="project" value="GO_Central"/>
</dbReference>
<dbReference type="GO" id="GO:0005524">
    <property type="term" value="F:ATP binding"/>
    <property type="evidence" value="ECO:0007669"/>
    <property type="project" value="UniProtKB-KW"/>
</dbReference>
<dbReference type="GO" id="GO:0016787">
    <property type="term" value="F:hydrolase activity"/>
    <property type="evidence" value="ECO:0007669"/>
    <property type="project" value="UniProtKB-KW"/>
</dbReference>
<dbReference type="GO" id="GO:0019901">
    <property type="term" value="F:protein kinase binding"/>
    <property type="evidence" value="ECO:0000318"/>
    <property type="project" value="GO_Central"/>
</dbReference>
<dbReference type="GO" id="GO:0098973">
    <property type="term" value="F:structural constituent of postsynaptic actin cytoskeleton"/>
    <property type="evidence" value="ECO:0000318"/>
    <property type="project" value="GO_Central"/>
</dbReference>
<dbReference type="GO" id="GO:0007409">
    <property type="term" value="P:axonogenesis"/>
    <property type="evidence" value="ECO:0000318"/>
    <property type="project" value="GO_Central"/>
</dbReference>
<dbReference type="GO" id="GO:0048870">
    <property type="term" value="P:cell motility"/>
    <property type="evidence" value="ECO:0000318"/>
    <property type="project" value="GO_Central"/>
</dbReference>
<dbReference type="CDD" id="cd10224">
    <property type="entry name" value="ASKHA_NBD_actin"/>
    <property type="match status" value="1"/>
</dbReference>
<dbReference type="FunFam" id="3.30.420.40:FF:000131">
    <property type="entry name" value="Actin, alpha skeletal muscle"/>
    <property type="match status" value="1"/>
</dbReference>
<dbReference type="FunFam" id="3.30.420.40:FF:000291">
    <property type="entry name" value="Actin, alpha skeletal muscle"/>
    <property type="match status" value="1"/>
</dbReference>
<dbReference type="FunFam" id="3.90.640.10:FF:000047">
    <property type="entry name" value="Actin, alpha skeletal muscle"/>
    <property type="match status" value="1"/>
</dbReference>
<dbReference type="FunFam" id="3.30.420.40:FF:000058">
    <property type="entry name" value="Putative actin-related protein 5"/>
    <property type="match status" value="1"/>
</dbReference>
<dbReference type="Gene3D" id="3.30.420.40">
    <property type="match status" value="2"/>
</dbReference>
<dbReference type="Gene3D" id="3.90.640.10">
    <property type="entry name" value="Actin, Chain A, domain 4"/>
    <property type="match status" value="1"/>
</dbReference>
<dbReference type="InterPro" id="IPR004000">
    <property type="entry name" value="Actin"/>
</dbReference>
<dbReference type="InterPro" id="IPR020902">
    <property type="entry name" value="Actin/actin-like_CS"/>
</dbReference>
<dbReference type="InterPro" id="IPR004001">
    <property type="entry name" value="Actin_CS"/>
</dbReference>
<dbReference type="InterPro" id="IPR043129">
    <property type="entry name" value="ATPase_NBD"/>
</dbReference>
<dbReference type="PANTHER" id="PTHR11937">
    <property type="entry name" value="ACTIN"/>
    <property type="match status" value="1"/>
</dbReference>
<dbReference type="Pfam" id="PF00022">
    <property type="entry name" value="Actin"/>
    <property type="match status" value="1"/>
</dbReference>
<dbReference type="PRINTS" id="PR00190">
    <property type="entry name" value="ACTIN"/>
</dbReference>
<dbReference type="SMART" id="SM00268">
    <property type="entry name" value="ACTIN"/>
    <property type="match status" value="1"/>
</dbReference>
<dbReference type="SUPFAM" id="SSF53067">
    <property type="entry name" value="Actin-like ATPase domain"/>
    <property type="match status" value="2"/>
</dbReference>
<dbReference type="PROSITE" id="PS00406">
    <property type="entry name" value="ACTINS_1"/>
    <property type="match status" value="1"/>
</dbReference>
<dbReference type="PROSITE" id="PS00432">
    <property type="entry name" value="ACTINS_2"/>
    <property type="match status" value="1"/>
</dbReference>
<dbReference type="PROSITE" id="PS01132">
    <property type="entry name" value="ACTINS_ACT_LIKE"/>
    <property type="match status" value="1"/>
</dbReference>
<evidence type="ECO:0000250" key="1">
    <source>
        <dbReference type="UniProtKB" id="P63260"/>
    </source>
</evidence>
<evidence type="ECO:0000250" key="2">
    <source>
        <dbReference type="UniProtKB" id="P63261"/>
    </source>
</evidence>
<evidence type="ECO:0000250" key="3">
    <source>
        <dbReference type="UniProtKB" id="P68137"/>
    </source>
</evidence>
<evidence type="ECO:0000269" key="4">
    <source>
    </source>
</evidence>
<evidence type="ECO:0000305" key="5"/>
<keyword id="KW-0007">Acetylation</keyword>
<keyword id="KW-0067">ATP-binding</keyword>
<keyword id="KW-0963">Cytoplasm</keyword>
<keyword id="KW-0206">Cytoskeleton</keyword>
<keyword id="KW-0903">Direct protein sequencing</keyword>
<keyword id="KW-0378">Hydrolase</keyword>
<keyword id="KW-0488">Methylation</keyword>
<keyword id="KW-0547">Nucleotide-binding</keyword>
<keyword id="KW-0558">Oxidation</keyword>
<keyword id="KW-1185">Reference proteome</keyword>
<proteinExistence type="evidence at protein level"/>